<organism>
    <name type="scientific">Proteus mirabilis (strain HI4320)</name>
    <dbReference type="NCBI Taxonomy" id="529507"/>
    <lineage>
        <taxon>Bacteria</taxon>
        <taxon>Pseudomonadati</taxon>
        <taxon>Pseudomonadota</taxon>
        <taxon>Gammaproteobacteria</taxon>
        <taxon>Enterobacterales</taxon>
        <taxon>Morganellaceae</taxon>
        <taxon>Proteus</taxon>
    </lineage>
</organism>
<reference key="1">
    <citation type="journal article" date="2008" name="J. Bacteriol.">
        <title>Complete genome sequence of uropathogenic Proteus mirabilis, a master of both adherence and motility.</title>
        <authorList>
            <person name="Pearson M.M."/>
            <person name="Sebaihia M."/>
            <person name="Churcher C."/>
            <person name="Quail M.A."/>
            <person name="Seshasayee A.S."/>
            <person name="Luscombe N.M."/>
            <person name="Abdellah Z."/>
            <person name="Arrosmith C."/>
            <person name="Atkin B."/>
            <person name="Chillingworth T."/>
            <person name="Hauser H."/>
            <person name="Jagels K."/>
            <person name="Moule S."/>
            <person name="Mungall K."/>
            <person name="Norbertczak H."/>
            <person name="Rabbinowitsch E."/>
            <person name="Walker D."/>
            <person name="Whithead S."/>
            <person name="Thomson N.R."/>
            <person name="Rather P.N."/>
            <person name="Parkhill J."/>
            <person name="Mobley H.L.T."/>
        </authorList>
    </citation>
    <scope>NUCLEOTIDE SEQUENCE [LARGE SCALE GENOMIC DNA]</scope>
    <source>
        <strain>HI4320</strain>
    </source>
</reference>
<comment type="function">
    <text evidence="1">DNA-dependent RNA polymerase catalyzes the transcription of DNA into RNA using the four ribonucleoside triphosphates as substrates.</text>
</comment>
<comment type="catalytic activity">
    <reaction evidence="1">
        <text>RNA(n) + a ribonucleoside 5'-triphosphate = RNA(n+1) + diphosphate</text>
        <dbReference type="Rhea" id="RHEA:21248"/>
        <dbReference type="Rhea" id="RHEA-COMP:14527"/>
        <dbReference type="Rhea" id="RHEA-COMP:17342"/>
        <dbReference type="ChEBI" id="CHEBI:33019"/>
        <dbReference type="ChEBI" id="CHEBI:61557"/>
        <dbReference type="ChEBI" id="CHEBI:140395"/>
        <dbReference type="EC" id="2.7.7.6"/>
    </reaction>
</comment>
<comment type="subunit">
    <text evidence="1">The RNAP catalytic core consists of 2 alpha, 1 beta, 1 beta' and 1 omega subunit. When a sigma factor is associated with the core the holoenzyme is formed, which can initiate transcription.</text>
</comment>
<comment type="similarity">
    <text evidence="1">Belongs to the RNA polymerase beta chain family.</text>
</comment>
<evidence type="ECO:0000255" key="1">
    <source>
        <dbReference type="HAMAP-Rule" id="MF_01321"/>
    </source>
</evidence>
<gene>
    <name evidence="1" type="primary">rpoB</name>
    <name type="ordered locus">PMI2785</name>
</gene>
<dbReference type="EC" id="2.7.7.6" evidence="1"/>
<dbReference type="EMBL" id="AM942759">
    <property type="protein sequence ID" value="CAR45495.1"/>
    <property type="molecule type" value="Genomic_DNA"/>
</dbReference>
<dbReference type="RefSeq" id="WP_004246906.1">
    <property type="nucleotide sequence ID" value="NC_010554.1"/>
</dbReference>
<dbReference type="SMR" id="B4EYU9"/>
<dbReference type="EnsemblBacteria" id="CAR45495">
    <property type="protein sequence ID" value="CAR45495"/>
    <property type="gene ID" value="PMI2785"/>
</dbReference>
<dbReference type="GeneID" id="6801994"/>
<dbReference type="KEGG" id="pmr:PMI2785"/>
<dbReference type="eggNOG" id="COG0085">
    <property type="taxonomic scope" value="Bacteria"/>
</dbReference>
<dbReference type="HOGENOM" id="CLU_000524_4_0_6"/>
<dbReference type="Proteomes" id="UP000008319">
    <property type="component" value="Chromosome"/>
</dbReference>
<dbReference type="GO" id="GO:0000428">
    <property type="term" value="C:DNA-directed RNA polymerase complex"/>
    <property type="evidence" value="ECO:0007669"/>
    <property type="project" value="UniProtKB-KW"/>
</dbReference>
<dbReference type="GO" id="GO:0003677">
    <property type="term" value="F:DNA binding"/>
    <property type="evidence" value="ECO:0007669"/>
    <property type="project" value="UniProtKB-UniRule"/>
</dbReference>
<dbReference type="GO" id="GO:0003899">
    <property type="term" value="F:DNA-directed RNA polymerase activity"/>
    <property type="evidence" value="ECO:0007669"/>
    <property type="project" value="UniProtKB-UniRule"/>
</dbReference>
<dbReference type="GO" id="GO:0032549">
    <property type="term" value="F:ribonucleoside binding"/>
    <property type="evidence" value="ECO:0007669"/>
    <property type="project" value="InterPro"/>
</dbReference>
<dbReference type="GO" id="GO:0006351">
    <property type="term" value="P:DNA-templated transcription"/>
    <property type="evidence" value="ECO:0007669"/>
    <property type="project" value="UniProtKB-UniRule"/>
</dbReference>
<dbReference type="CDD" id="cd00653">
    <property type="entry name" value="RNA_pol_B_RPB2"/>
    <property type="match status" value="1"/>
</dbReference>
<dbReference type="FunFam" id="2.30.150.10:FF:000001">
    <property type="entry name" value="DNA-directed RNA polymerase subunit beta"/>
    <property type="match status" value="1"/>
</dbReference>
<dbReference type="FunFam" id="2.40.270.10:FF:000003">
    <property type="entry name" value="DNA-directed RNA polymerase subunit beta"/>
    <property type="match status" value="1"/>
</dbReference>
<dbReference type="FunFam" id="2.40.270.10:FF:000004">
    <property type="entry name" value="DNA-directed RNA polymerase subunit beta"/>
    <property type="match status" value="1"/>
</dbReference>
<dbReference type="FunFam" id="2.40.50.100:FF:000006">
    <property type="entry name" value="DNA-directed RNA polymerase subunit beta"/>
    <property type="match status" value="1"/>
</dbReference>
<dbReference type="FunFam" id="2.40.50.150:FF:000001">
    <property type="entry name" value="DNA-directed RNA polymerase subunit beta"/>
    <property type="match status" value="1"/>
</dbReference>
<dbReference type="FunFam" id="3.90.1100.10:FF:000002">
    <property type="entry name" value="DNA-directed RNA polymerase subunit beta"/>
    <property type="match status" value="1"/>
</dbReference>
<dbReference type="FunFam" id="3.90.1110.10:FF:000001">
    <property type="entry name" value="DNA-directed RNA polymerase subunit beta"/>
    <property type="match status" value="1"/>
</dbReference>
<dbReference type="FunFam" id="3.90.1110.10:FF:000004">
    <property type="entry name" value="DNA-directed RNA polymerase subunit beta"/>
    <property type="match status" value="1"/>
</dbReference>
<dbReference type="FunFam" id="3.90.1800.10:FF:000001">
    <property type="entry name" value="DNA-directed RNA polymerase subunit beta"/>
    <property type="match status" value="1"/>
</dbReference>
<dbReference type="Gene3D" id="2.40.50.100">
    <property type="match status" value="1"/>
</dbReference>
<dbReference type="Gene3D" id="2.40.50.150">
    <property type="match status" value="1"/>
</dbReference>
<dbReference type="Gene3D" id="3.90.1100.10">
    <property type="match status" value="2"/>
</dbReference>
<dbReference type="Gene3D" id="6.10.140.1670">
    <property type="match status" value="1"/>
</dbReference>
<dbReference type="Gene3D" id="2.30.150.10">
    <property type="entry name" value="DNA-directed RNA polymerase, beta subunit, external 1 domain"/>
    <property type="match status" value="1"/>
</dbReference>
<dbReference type="Gene3D" id="2.40.270.10">
    <property type="entry name" value="DNA-directed RNA polymerase, subunit 2, domain 6"/>
    <property type="match status" value="1"/>
</dbReference>
<dbReference type="Gene3D" id="3.90.1800.10">
    <property type="entry name" value="RNA polymerase alpha subunit dimerisation domain"/>
    <property type="match status" value="1"/>
</dbReference>
<dbReference type="Gene3D" id="3.90.1110.10">
    <property type="entry name" value="RNA polymerase Rpb2, domain 2"/>
    <property type="match status" value="1"/>
</dbReference>
<dbReference type="HAMAP" id="MF_01321">
    <property type="entry name" value="RNApol_bact_RpoB"/>
    <property type="match status" value="1"/>
</dbReference>
<dbReference type="InterPro" id="IPR042107">
    <property type="entry name" value="DNA-dir_RNA_pol_bsu_ext_1_sf"/>
</dbReference>
<dbReference type="InterPro" id="IPR019462">
    <property type="entry name" value="DNA-dir_RNA_pol_bsu_external_1"/>
</dbReference>
<dbReference type="InterPro" id="IPR015712">
    <property type="entry name" value="DNA-dir_RNA_pol_su2"/>
</dbReference>
<dbReference type="InterPro" id="IPR007120">
    <property type="entry name" value="DNA-dir_RNAP_su2_dom"/>
</dbReference>
<dbReference type="InterPro" id="IPR037033">
    <property type="entry name" value="DNA-dir_RNAP_su2_hyb_sf"/>
</dbReference>
<dbReference type="InterPro" id="IPR010243">
    <property type="entry name" value="RNA_pol_bsu_bac"/>
</dbReference>
<dbReference type="InterPro" id="IPR007121">
    <property type="entry name" value="RNA_pol_bsu_CS"/>
</dbReference>
<dbReference type="InterPro" id="IPR007644">
    <property type="entry name" value="RNA_pol_bsu_protrusion"/>
</dbReference>
<dbReference type="InterPro" id="IPR007642">
    <property type="entry name" value="RNA_pol_Rpb2_2"/>
</dbReference>
<dbReference type="InterPro" id="IPR037034">
    <property type="entry name" value="RNA_pol_Rpb2_2_sf"/>
</dbReference>
<dbReference type="InterPro" id="IPR007645">
    <property type="entry name" value="RNA_pol_Rpb2_3"/>
</dbReference>
<dbReference type="InterPro" id="IPR007641">
    <property type="entry name" value="RNA_pol_Rpb2_7"/>
</dbReference>
<dbReference type="InterPro" id="IPR014724">
    <property type="entry name" value="RNA_pol_RPB2_OB-fold"/>
</dbReference>
<dbReference type="NCBIfam" id="NF001616">
    <property type="entry name" value="PRK00405.1"/>
    <property type="match status" value="1"/>
</dbReference>
<dbReference type="NCBIfam" id="TIGR02013">
    <property type="entry name" value="rpoB"/>
    <property type="match status" value="1"/>
</dbReference>
<dbReference type="PANTHER" id="PTHR20856">
    <property type="entry name" value="DNA-DIRECTED RNA POLYMERASE I SUBUNIT 2"/>
    <property type="match status" value="1"/>
</dbReference>
<dbReference type="Pfam" id="PF04563">
    <property type="entry name" value="RNA_pol_Rpb2_1"/>
    <property type="match status" value="1"/>
</dbReference>
<dbReference type="Pfam" id="PF04561">
    <property type="entry name" value="RNA_pol_Rpb2_2"/>
    <property type="match status" value="2"/>
</dbReference>
<dbReference type="Pfam" id="PF04565">
    <property type="entry name" value="RNA_pol_Rpb2_3"/>
    <property type="match status" value="1"/>
</dbReference>
<dbReference type="Pfam" id="PF10385">
    <property type="entry name" value="RNA_pol_Rpb2_45"/>
    <property type="match status" value="1"/>
</dbReference>
<dbReference type="Pfam" id="PF00562">
    <property type="entry name" value="RNA_pol_Rpb2_6"/>
    <property type="match status" value="1"/>
</dbReference>
<dbReference type="Pfam" id="PF04560">
    <property type="entry name" value="RNA_pol_Rpb2_7"/>
    <property type="match status" value="1"/>
</dbReference>
<dbReference type="SUPFAM" id="SSF64484">
    <property type="entry name" value="beta and beta-prime subunits of DNA dependent RNA-polymerase"/>
    <property type="match status" value="1"/>
</dbReference>
<dbReference type="PROSITE" id="PS01166">
    <property type="entry name" value="RNA_POL_BETA"/>
    <property type="match status" value="1"/>
</dbReference>
<accession>B4EYU9</accession>
<protein>
    <recommendedName>
        <fullName evidence="1">DNA-directed RNA polymerase subunit beta</fullName>
        <shortName evidence="1">RNAP subunit beta</shortName>
        <ecNumber evidence="1">2.7.7.6</ecNumber>
    </recommendedName>
    <alternativeName>
        <fullName evidence="1">RNA polymerase subunit beta</fullName>
    </alternativeName>
    <alternativeName>
        <fullName evidence="1">Transcriptase subunit beta</fullName>
    </alternativeName>
</protein>
<keyword id="KW-0240">DNA-directed RNA polymerase</keyword>
<keyword id="KW-0548">Nucleotidyltransferase</keyword>
<keyword id="KW-1185">Reference proteome</keyword>
<keyword id="KW-0804">Transcription</keyword>
<keyword id="KW-0808">Transferase</keyword>
<sequence>MVYSYTEKKRIRKDFGKRPQVLDVPYLLSIQLDSFQKFIEQDPDGQNGLEAAFRSVFPIQSYSGNAELQYVSYRLGEPVFDVKECQIRGVTYSAPLRVKLRLVIYEREAPEGTVKDIKEQEVYMGEIPLMTDNGTFVINGTERVIVSQLHRSPGVFFDSDKGKTHSSGKVLYNARIIPYRGSWLDFEFDPKDNLFVRIDRRRKLPATIILRAMNYSTEDILNLFFEKTTFEISNNKLMMTLVPERLRGETASFDIEANGKVYVEKGRRITARHIRQLEKEQIERIEVPVEYIAGKVVARDYIDEATGELICAANMEISLDVLARLSQAGHKTIETLFTNDLDHGAYISETIRVDPTNDRLSALVEIYRMMRPGEPPTREAAENLFENLFFSEDRYDLSAVGRMKFNRSLGREEVEGSGILSQEDIIEVMKKLIDIRNGKGEVDDIDHLGNRRIRSVGEMAENQFRVGLVRVERAVKERLSLGDLDALMPQDMINAKPISAAVKEFFGSSQLSQFMDQNNPLSEITHKRRISALGPGGLTRERAGFEVRDVHPTHYGRVCPIETPEGPNIGLINSLSVYAQTNEYGFLETPYRVVENNAVTDEIHYLSAIEEGNFIIAQANSVLDDDGHFVEELVTCRHKGESSLFSRDQVQYMDVSTQQVVSVGASLIPFLEHDDANRALMGANMQRQAVPTLRGDKPLVGTGMERAVAVDSGVTAVAKRGGTVQYVDASRIVIKVNEDETYAGEAGIDIYSLTKYTRSNQNTCINQTPCVSLGEPVERGDVLADGPSTDLGELALGQNMRVAFMPWNGYNYEDSILVSERVVQEDRFTTIHIQELACVSRDTKLGPEEITADIPNVGEAALSKLDESGIVYIGAEVKGGDILVGKVTPKGETQLTPEEKLLRAIFGEKASDVKDSSLRVPNGVSGTVIDVQVFTRDGVEKDKRALEIEESQLREVKKDLTEELRIFEAGLFARIRGVLIAGGIEADKLDKLPRERWLELGLADEEKQNQLEQLAEQYDELKAEFAKKLEAKRRKITQGDDLAPGVLKIVKVYLAVKRQIQPGDKMAGRHGNKGVISKINPIEDMPYDENGNPVDLVLNPLGVPSRMNIGQILETHLGMAAKGIGDKINAMLKQQQEVAKLREFIQKAYDLGMAPRQKVDLDTFSDEEVLRLAENLKKGMPTATPVFDGAEEMEIKEMLKLADLPTSGQITLFDGRTGEQFERPVTVGYMYMLKLNHLVDDKMHARSTGSYSLVTQQPLGGKAQFGGQRFGEMEVWALEAYGAAYTLQEMLTVKSDDVNGRTKMYKNIVDGNHQMEPGMPESFNVLLKEIRSLGINIELEDE</sequence>
<proteinExistence type="inferred from homology"/>
<name>RPOB_PROMH</name>
<feature type="chain" id="PRO_1000141721" description="DNA-directed RNA polymerase subunit beta">
    <location>
        <begin position="1"/>
        <end position="1342"/>
    </location>
</feature>